<name>YCIY_ECOK1</name>
<proteinExistence type="inferred from homology"/>
<gene>
    <name type="primary">yciY</name>
    <name type="ordered locus">Ecok1_11700</name>
    <name type="ORF">APECO1_365</name>
</gene>
<sequence>MKRSRTEVGRWRMQRQASRRKSRWLEGQSRRNMRIHSIRKCILNKQRNSLLFAIYNI</sequence>
<reference key="1">
    <citation type="journal article" date="2007" name="J. Bacteriol.">
        <title>The genome sequence of avian pathogenic Escherichia coli strain O1:K1:H7 shares strong similarities with human extraintestinal pathogenic E. coli genomes.</title>
        <authorList>
            <person name="Johnson T.J."/>
            <person name="Kariyawasam S."/>
            <person name="Wannemuehler Y."/>
            <person name="Mangiamele P."/>
            <person name="Johnson S.J."/>
            <person name="Doetkott C."/>
            <person name="Skyberg J.A."/>
            <person name="Lynne A.M."/>
            <person name="Johnson J.R."/>
            <person name="Nolan L.K."/>
        </authorList>
    </citation>
    <scope>NUCLEOTIDE SEQUENCE [LARGE SCALE GENOMIC DNA]</scope>
</reference>
<comment type="similarity">
    <text evidence="2">Belongs to the YciY family.</text>
</comment>
<comment type="sequence caution" evidence="2">
    <conflict type="erroneous initiation">
        <sequence resource="EMBL-CDS" id="ABJ00664"/>
    </conflict>
</comment>
<protein>
    <recommendedName>
        <fullName>Uncharacterized protein YciY</fullName>
    </recommendedName>
</protein>
<organism>
    <name type="scientific">Escherichia coli O1:K1 / APEC</name>
    <dbReference type="NCBI Taxonomy" id="405955"/>
    <lineage>
        <taxon>Bacteria</taxon>
        <taxon>Pseudomonadati</taxon>
        <taxon>Pseudomonadota</taxon>
        <taxon>Gammaproteobacteria</taxon>
        <taxon>Enterobacterales</taxon>
        <taxon>Enterobacteriaceae</taxon>
        <taxon>Escherichia</taxon>
    </lineage>
</organism>
<keyword id="KW-1185">Reference proteome</keyword>
<evidence type="ECO:0000256" key="1">
    <source>
        <dbReference type="SAM" id="MobiDB-lite"/>
    </source>
</evidence>
<evidence type="ECO:0000305" key="2"/>
<accession>A1AAH4</accession>
<dbReference type="EMBL" id="CP000468">
    <property type="protein sequence ID" value="ABJ00664.1"/>
    <property type="status" value="ALT_INIT"/>
    <property type="molecule type" value="Genomic_DNA"/>
</dbReference>
<dbReference type="RefSeq" id="WP_001309467.1">
    <property type="nucleotide sequence ID" value="NZ_CADILS010000001.1"/>
</dbReference>
<dbReference type="KEGG" id="ecv:APECO1_365"/>
<dbReference type="HOGENOM" id="CLU_2381553_0_0_6"/>
<dbReference type="Proteomes" id="UP000008216">
    <property type="component" value="Chromosome"/>
</dbReference>
<dbReference type="InterPro" id="IPR049586">
    <property type="entry name" value="YciY"/>
</dbReference>
<dbReference type="NCBIfam" id="NF033701">
    <property type="entry name" value="yciY_fam"/>
    <property type="match status" value="1"/>
</dbReference>
<feature type="chain" id="PRO_0000311783" description="Uncharacterized protein YciY">
    <location>
        <begin position="1"/>
        <end position="57"/>
    </location>
</feature>
<feature type="region of interest" description="Disordered" evidence="1">
    <location>
        <begin position="1"/>
        <end position="25"/>
    </location>
</feature>
<feature type="compositionally biased region" description="Basic and acidic residues" evidence="1">
    <location>
        <begin position="1"/>
        <end position="10"/>
    </location>
</feature>